<sequence length="630" mass="69641">MIYPTQYDVIVIGGGHAGTEACLAAARMGCKTLLLTHNIETLGQMSCNPAIGGIGKSHLVKEIDALGGAMALATDKGGIQFRILNSRKGPAVRATRAQADRALYKAAVREILENQPNLDIFQQAADDLVVEGERVTGVTTQMGVTFKAPTVVLTAGTFLGGKIHIGMENHSGGRAGDPPSIALASRLRELPLRVDRLKTGTPPRIDARSVNFDGLEKQWGEEKTPVMSYMGSLADHPEQTCCWITHTNAQTHDFIRSGFDRSPMFTGVIEGVGPRYCPSIEDKVNRFADKDSHQIFIEPEGLKTHELYPNGISTSLPFDVQMAFVRSIKGFENAHITRPGYAIEYDFFDPRDLKYSFETKHIEGLFFAGQINGTTGYEEAGAQGLLAGLNAALKAQGKEAWCPRRDEAYIGVLADDLISMGTREPYRMFTSRAEYRLLLREDNADMRLTEKGRELGLVDDARWQAFCKKREAIELETQRMRTTWIQPNSAEANALAAKMPAELAREYSLLDLLKRPELTYDDLGSLKGEAVSDPQVAEQVEINTKYAGYINRQTDDIERMRQHENTVIPVEFDYMSVEGLSNELKQKLSEARPETLSRASRIPGVTPAAVSLILIYLKKRGLLKNKAALA</sequence>
<organism>
    <name type="scientific">Saccharophagus degradans (strain 2-40 / ATCC 43961 / DSM 17024)</name>
    <dbReference type="NCBI Taxonomy" id="203122"/>
    <lineage>
        <taxon>Bacteria</taxon>
        <taxon>Pseudomonadati</taxon>
        <taxon>Pseudomonadota</taxon>
        <taxon>Gammaproteobacteria</taxon>
        <taxon>Cellvibrionales</taxon>
        <taxon>Cellvibrionaceae</taxon>
        <taxon>Saccharophagus</taxon>
    </lineage>
</organism>
<keyword id="KW-0963">Cytoplasm</keyword>
<keyword id="KW-0274">FAD</keyword>
<keyword id="KW-0285">Flavoprotein</keyword>
<keyword id="KW-0520">NAD</keyword>
<keyword id="KW-1185">Reference proteome</keyword>
<keyword id="KW-0819">tRNA processing</keyword>
<dbReference type="EMBL" id="CP000282">
    <property type="protein sequence ID" value="ABD83267.1"/>
    <property type="molecule type" value="Genomic_DNA"/>
</dbReference>
<dbReference type="RefSeq" id="WP_011470482.1">
    <property type="nucleotide sequence ID" value="NC_007912.1"/>
</dbReference>
<dbReference type="SMR" id="Q21DG2"/>
<dbReference type="STRING" id="203122.Sde_4012"/>
<dbReference type="GeneID" id="98615603"/>
<dbReference type="KEGG" id="sde:Sde_4012"/>
<dbReference type="eggNOG" id="COG0445">
    <property type="taxonomic scope" value="Bacteria"/>
</dbReference>
<dbReference type="HOGENOM" id="CLU_007831_2_2_6"/>
<dbReference type="OrthoDB" id="9815560at2"/>
<dbReference type="Proteomes" id="UP000001947">
    <property type="component" value="Chromosome"/>
</dbReference>
<dbReference type="GO" id="GO:0005829">
    <property type="term" value="C:cytosol"/>
    <property type="evidence" value="ECO:0007669"/>
    <property type="project" value="TreeGrafter"/>
</dbReference>
<dbReference type="GO" id="GO:0050660">
    <property type="term" value="F:flavin adenine dinucleotide binding"/>
    <property type="evidence" value="ECO:0007669"/>
    <property type="project" value="UniProtKB-UniRule"/>
</dbReference>
<dbReference type="GO" id="GO:0030488">
    <property type="term" value="P:tRNA methylation"/>
    <property type="evidence" value="ECO:0007669"/>
    <property type="project" value="TreeGrafter"/>
</dbReference>
<dbReference type="GO" id="GO:0002098">
    <property type="term" value="P:tRNA wobble uridine modification"/>
    <property type="evidence" value="ECO:0007669"/>
    <property type="project" value="InterPro"/>
</dbReference>
<dbReference type="FunFam" id="1.10.10.1800:FF:000001">
    <property type="entry name" value="tRNA uridine 5-carboxymethylaminomethyl modification enzyme MnmG"/>
    <property type="match status" value="1"/>
</dbReference>
<dbReference type="FunFam" id="1.10.150.570:FF:000001">
    <property type="entry name" value="tRNA uridine 5-carboxymethylaminomethyl modification enzyme MnmG"/>
    <property type="match status" value="1"/>
</dbReference>
<dbReference type="FunFam" id="3.50.50.60:FF:000002">
    <property type="entry name" value="tRNA uridine 5-carboxymethylaminomethyl modification enzyme MnmG"/>
    <property type="match status" value="1"/>
</dbReference>
<dbReference type="FunFam" id="3.50.50.60:FF:000010">
    <property type="entry name" value="tRNA uridine 5-carboxymethylaminomethyl modification enzyme MnmG"/>
    <property type="match status" value="1"/>
</dbReference>
<dbReference type="Gene3D" id="3.50.50.60">
    <property type="entry name" value="FAD/NAD(P)-binding domain"/>
    <property type="match status" value="2"/>
</dbReference>
<dbReference type="Gene3D" id="1.10.150.570">
    <property type="entry name" value="GidA associated domain, C-terminal subdomain"/>
    <property type="match status" value="1"/>
</dbReference>
<dbReference type="Gene3D" id="1.10.10.1800">
    <property type="entry name" value="tRNA uridine 5-carboxymethylaminomethyl modification enzyme MnmG/GidA"/>
    <property type="match status" value="1"/>
</dbReference>
<dbReference type="HAMAP" id="MF_00129">
    <property type="entry name" value="MnmG_GidA"/>
    <property type="match status" value="1"/>
</dbReference>
<dbReference type="InterPro" id="IPR036188">
    <property type="entry name" value="FAD/NAD-bd_sf"/>
</dbReference>
<dbReference type="InterPro" id="IPR049312">
    <property type="entry name" value="GIDA_C_N"/>
</dbReference>
<dbReference type="InterPro" id="IPR004416">
    <property type="entry name" value="MnmG"/>
</dbReference>
<dbReference type="InterPro" id="IPR002218">
    <property type="entry name" value="MnmG-rel"/>
</dbReference>
<dbReference type="InterPro" id="IPR020595">
    <property type="entry name" value="MnmG-rel_CS"/>
</dbReference>
<dbReference type="InterPro" id="IPR026904">
    <property type="entry name" value="MnmG_C"/>
</dbReference>
<dbReference type="InterPro" id="IPR047001">
    <property type="entry name" value="MnmG_C_subdom"/>
</dbReference>
<dbReference type="InterPro" id="IPR044920">
    <property type="entry name" value="MnmG_C_subdom_sf"/>
</dbReference>
<dbReference type="InterPro" id="IPR040131">
    <property type="entry name" value="MnmG_N"/>
</dbReference>
<dbReference type="NCBIfam" id="TIGR00136">
    <property type="entry name" value="mnmG_gidA"/>
    <property type="match status" value="1"/>
</dbReference>
<dbReference type="PANTHER" id="PTHR11806">
    <property type="entry name" value="GLUCOSE INHIBITED DIVISION PROTEIN A"/>
    <property type="match status" value="1"/>
</dbReference>
<dbReference type="PANTHER" id="PTHR11806:SF0">
    <property type="entry name" value="PROTEIN MTO1 HOMOLOG, MITOCHONDRIAL"/>
    <property type="match status" value="1"/>
</dbReference>
<dbReference type="Pfam" id="PF01134">
    <property type="entry name" value="GIDA"/>
    <property type="match status" value="1"/>
</dbReference>
<dbReference type="Pfam" id="PF21680">
    <property type="entry name" value="GIDA_C_1st"/>
    <property type="match status" value="1"/>
</dbReference>
<dbReference type="Pfam" id="PF13932">
    <property type="entry name" value="SAM_GIDA_C"/>
    <property type="match status" value="1"/>
</dbReference>
<dbReference type="SMART" id="SM01228">
    <property type="entry name" value="GIDA_assoc_3"/>
    <property type="match status" value="1"/>
</dbReference>
<dbReference type="SUPFAM" id="SSF51905">
    <property type="entry name" value="FAD/NAD(P)-binding domain"/>
    <property type="match status" value="1"/>
</dbReference>
<dbReference type="PROSITE" id="PS01280">
    <property type="entry name" value="GIDA_1"/>
    <property type="match status" value="1"/>
</dbReference>
<dbReference type="PROSITE" id="PS01281">
    <property type="entry name" value="GIDA_2"/>
    <property type="match status" value="1"/>
</dbReference>
<reference key="1">
    <citation type="journal article" date="2008" name="PLoS Genet.">
        <title>Complete genome sequence of the complex carbohydrate-degrading marine bacterium, Saccharophagus degradans strain 2-40 T.</title>
        <authorList>
            <person name="Weiner R.M."/>
            <person name="Taylor L.E. II"/>
            <person name="Henrissat B."/>
            <person name="Hauser L."/>
            <person name="Land M."/>
            <person name="Coutinho P.M."/>
            <person name="Rancurel C."/>
            <person name="Saunders E.H."/>
            <person name="Longmire A.G."/>
            <person name="Zhang H."/>
            <person name="Bayer E.A."/>
            <person name="Gilbert H.J."/>
            <person name="Larimer F."/>
            <person name="Zhulin I.B."/>
            <person name="Ekborg N.A."/>
            <person name="Lamed R."/>
            <person name="Richardson P.M."/>
            <person name="Borovok I."/>
            <person name="Hutcheson S."/>
        </authorList>
    </citation>
    <scope>NUCLEOTIDE SEQUENCE [LARGE SCALE GENOMIC DNA]</scope>
    <source>
        <strain>2-40 / ATCC 43961 / DSM 17024</strain>
    </source>
</reference>
<gene>
    <name evidence="1" type="primary">mnmG</name>
    <name evidence="1" type="synonym">gidA</name>
    <name type="ordered locus">Sde_4012</name>
</gene>
<comment type="function">
    <text evidence="1">NAD-binding protein involved in the addition of a carboxymethylaminomethyl (cmnm) group at the wobble position (U34) of certain tRNAs, forming tRNA-cmnm(5)s(2)U34.</text>
</comment>
<comment type="cofactor">
    <cofactor evidence="1">
        <name>FAD</name>
        <dbReference type="ChEBI" id="CHEBI:57692"/>
    </cofactor>
</comment>
<comment type="subunit">
    <text evidence="1">Homodimer. Heterotetramer of two MnmE and two MnmG subunits.</text>
</comment>
<comment type="subcellular location">
    <subcellularLocation>
        <location evidence="1">Cytoplasm</location>
    </subcellularLocation>
</comment>
<comment type="similarity">
    <text evidence="1">Belongs to the MnmG family.</text>
</comment>
<evidence type="ECO:0000255" key="1">
    <source>
        <dbReference type="HAMAP-Rule" id="MF_00129"/>
    </source>
</evidence>
<name>MNMG_SACD2</name>
<proteinExistence type="inferred from homology"/>
<feature type="chain" id="PRO_1000016667" description="tRNA uridine 5-carboxymethylaminomethyl modification enzyme MnmG">
    <location>
        <begin position="1"/>
        <end position="630"/>
    </location>
</feature>
<feature type="binding site" evidence="1">
    <location>
        <begin position="13"/>
        <end position="18"/>
    </location>
    <ligand>
        <name>FAD</name>
        <dbReference type="ChEBI" id="CHEBI:57692"/>
    </ligand>
</feature>
<feature type="binding site" evidence="1">
    <location>
        <begin position="273"/>
        <end position="287"/>
    </location>
    <ligand>
        <name>NAD(+)</name>
        <dbReference type="ChEBI" id="CHEBI:57540"/>
    </ligand>
</feature>
<protein>
    <recommendedName>
        <fullName evidence="1">tRNA uridine 5-carboxymethylaminomethyl modification enzyme MnmG</fullName>
    </recommendedName>
    <alternativeName>
        <fullName evidence="1">Glucose-inhibited division protein A</fullName>
    </alternativeName>
</protein>
<accession>Q21DG2</accession>